<keyword id="KW-0027">Amidation</keyword>
<keyword id="KW-0878">Amphibian defense peptide</keyword>
<keyword id="KW-0903">Direct protein sequencing</keyword>
<keyword id="KW-0964">Secreted</keyword>
<sequence>GVLDAFRKIATVVKNLV</sequence>
<dbReference type="GO" id="GO:0005576">
    <property type="term" value="C:extracellular region"/>
    <property type="evidence" value="ECO:0007669"/>
    <property type="project" value="UniProtKB-SubCell"/>
</dbReference>
<dbReference type="GO" id="GO:0006952">
    <property type="term" value="P:defense response"/>
    <property type="evidence" value="ECO:0007669"/>
    <property type="project" value="UniProtKB-KW"/>
</dbReference>
<dbReference type="InterPro" id="IPR012527">
    <property type="entry name" value="Antimicrobial_8"/>
</dbReference>
<dbReference type="Pfam" id="PF08103">
    <property type="entry name" value="Antimicrobial_8"/>
    <property type="match status" value="1"/>
</dbReference>
<proteinExistence type="evidence at protein level"/>
<evidence type="ECO:0000269" key="1">
    <source ref="1"/>
</evidence>
<protein>
    <recommendedName>
        <fullName>Uperin-3.2</fullName>
    </recommendedName>
</protein>
<accession>P82033</accession>
<comment type="subcellular location">
    <subcellularLocation>
        <location>Secreted</location>
    </subcellularLocation>
</comment>
<comment type="tissue specificity">
    <text>Expressed by the skin dorsal glands.</text>
</comment>
<comment type="mass spectrometry"/>
<organism>
    <name type="scientific">Uperoleia inundata</name>
    <name type="common">Floodplain toadlet</name>
    <dbReference type="NCBI Taxonomy" id="104953"/>
    <lineage>
        <taxon>Eukaryota</taxon>
        <taxon>Metazoa</taxon>
        <taxon>Chordata</taxon>
        <taxon>Craniata</taxon>
        <taxon>Vertebrata</taxon>
        <taxon>Euteleostomi</taxon>
        <taxon>Amphibia</taxon>
        <taxon>Batrachia</taxon>
        <taxon>Anura</taxon>
        <taxon>Neobatrachia</taxon>
        <taxon>Myobatrachoidea</taxon>
        <taxon>Myobatrachidae</taxon>
        <taxon>Myobatrachinae</taxon>
        <taxon>Uperoleia</taxon>
    </lineage>
</organism>
<feature type="peptide" id="PRO_0000043855" description="Uperin-3.2">
    <location>
        <begin position="1"/>
        <end position="17"/>
    </location>
</feature>
<feature type="modified residue" description="Valine amide" evidence="1">
    <location>
        <position position="17"/>
    </location>
</feature>
<reference key="1">
    <citation type="journal article" date="1996" name="Aust. J. Chem.">
        <title>Novel uperin peptides from the dorsal glands of the australian floodplain toadlet Uperoleia inundata.</title>
        <authorList>
            <person name="Bradford A.M."/>
            <person name="Raftery M.J."/>
            <person name="Bowie J.H."/>
            <person name="Tyler M.J."/>
            <person name="Wallace J.C."/>
            <person name="Adams G.W."/>
            <person name="Severini C."/>
        </authorList>
    </citation>
    <scope>PROTEIN SEQUENCE</scope>
    <scope>AMIDATION AT VAL-17</scope>
    <scope>MASS SPECTROMETRY</scope>
    <source>
        <tissue>Skin secretion</tissue>
    </source>
</reference>
<name>UPE32_UPEIN</name>